<proteinExistence type="evidence at protein level"/>
<sequence>MAEKRNIFLVGPMGAGKSTIGRQLAQQLNMEFYDSDQEIEKRTGADVGWVFDLEGEEGFRDREEKVINELTEKQGIVLATGGGSVKSRETRNRLSARGVVVYLETTIEKQLARTQRDKKRPLLHVETPPREVLEALANERNPLYEEIADVTIRTDDQSAKVVANQIIHMLESN</sequence>
<gene>
    <name type="primary">aroK</name>
    <name type="ordered locus">b3390</name>
    <name type="ordered locus">JW5947</name>
</gene>
<protein>
    <recommendedName>
        <fullName>Shikimate kinase 1</fullName>
        <shortName>SK 1</shortName>
        <ecNumber>2.7.1.71</ecNumber>
    </recommendedName>
    <alternativeName>
        <fullName>Shikimate kinase I</fullName>
        <shortName>SKI</shortName>
    </alternativeName>
</protein>
<organism>
    <name type="scientific">Escherichia coli (strain K12)</name>
    <dbReference type="NCBI Taxonomy" id="83333"/>
    <lineage>
        <taxon>Bacteria</taxon>
        <taxon>Pseudomonadati</taxon>
        <taxon>Pseudomonadota</taxon>
        <taxon>Gammaproteobacteria</taxon>
        <taxon>Enterobacterales</taxon>
        <taxon>Enterobacteriaceae</taxon>
        <taxon>Escherichia</taxon>
    </lineage>
</organism>
<comment type="function">
    <text evidence="3">Catalyzes the specific phosphorylation of the 3-hydroxyl group of shikimic acid using ATP as a cosubstrate.</text>
</comment>
<comment type="catalytic activity">
    <reaction>
        <text>shikimate + ATP = 3-phosphoshikimate + ADP + H(+)</text>
        <dbReference type="Rhea" id="RHEA:13121"/>
        <dbReference type="ChEBI" id="CHEBI:15378"/>
        <dbReference type="ChEBI" id="CHEBI:30616"/>
        <dbReference type="ChEBI" id="CHEBI:36208"/>
        <dbReference type="ChEBI" id="CHEBI:145989"/>
        <dbReference type="ChEBI" id="CHEBI:456216"/>
        <dbReference type="EC" id="2.7.1.71"/>
    </reaction>
</comment>
<comment type="cofactor">
    <cofactor evidence="7">
        <name>Mg(2+)</name>
        <dbReference type="ChEBI" id="CHEBI:18420"/>
    </cofactor>
    <text evidence="7">Binds 1 Mg(2+) ion per subunit.</text>
</comment>
<comment type="biophysicochemical properties">
    <kinetics>
        <KM evidence="4">20 mM for shikimate</KM>
    </kinetics>
</comment>
<comment type="pathway">
    <text>Metabolic intermediate biosynthesis; chorismate biosynthesis; chorismate from D-erythrose 4-phosphate and phosphoenolpyruvate: step 5/7.</text>
</comment>
<comment type="subunit">
    <text evidence="2">Monomer.</text>
</comment>
<comment type="subcellular location">
    <subcellularLocation>
        <location evidence="7">Cytoplasm</location>
    </subcellularLocation>
</comment>
<comment type="induction">
    <text>Constitutively expressed.</text>
</comment>
<comment type="domain">
    <text>The LID domain closes over the active site upon ATP binding.</text>
</comment>
<comment type="miscellaneous">
    <text>Two isozymes have been found in E.coli. AroK has 100-fold lower affinity for shikimate than AroL, suggesting that AroL is the dominant enzyme in the biosynthesis of the aromatic amino acids, with AroK playing a secondary role and possibly participating in an as yet unidentified cellular process.</text>
</comment>
<comment type="similarity">
    <text evidence="7">Belongs to the shikimate kinase family.</text>
</comment>
<comment type="sequence caution" evidence="7">
    <conflict type="erroneous initiation">
        <sequence resource="EMBL-CDS" id="AAA58187"/>
    </conflict>
    <text>Extended N-terminus.</text>
</comment>
<comment type="sequence caution" evidence="7">
    <conflict type="frameshift">
        <sequence resource="EMBL-CDS" id="AAC36834"/>
    </conflict>
</comment>
<comment type="sequence caution" evidence="7">
    <conflict type="frameshift">
        <sequence resource="EMBL-CDS" id="CAA79665"/>
    </conflict>
</comment>
<accession>P0A6D7</accession>
<accession>P24167</accession>
<accession>P78113</accession>
<accession>Q2M755</accession>
<accession>Q8X4S0</accession>
<reference key="1">
    <citation type="journal article" date="1992" name="J. Bacteriol.">
        <title>Identification of the gene (aroK) encoding shikimic acid kinase I of Escherichia coli.</title>
        <authorList>
            <person name="Lobner-Olesen A."/>
            <person name="Boye E."/>
            <person name="Marinus M.G."/>
        </authorList>
    </citation>
    <scope>NUCLEOTIDE SEQUENCE [GENOMIC DNA]</scope>
    <scope>FUNCTION</scope>
    <source>
        <strain>K12</strain>
    </source>
</reference>
<reference key="2">
    <citation type="journal article" date="1992" name="Mol. Microbiol.">
        <title>Expression of the Escherichia coli dam gene.</title>
        <authorList>
            <person name="Lobner-Olesen A."/>
            <person name="Boye E."/>
            <person name="Marinus M.G."/>
        </authorList>
    </citation>
    <scope>NUCLEOTIDE SEQUENCE [GENOMIC DNA]</scope>
</reference>
<reference key="3">
    <citation type="journal article" date="1995" name="DNA Seq.">
        <title>The gene (aroK) encoding shikimate kinase I from Escherichia coli.</title>
        <authorList>
            <person name="Griffin H.G."/>
            <person name="Gasson M.J."/>
        </authorList>
    </citation>
    <scope>NUCLEOTIDE SEQUENCE [GENOMIC DNA]</scope>
    <source>
        <strain>K12</strain>
    </source>
</reference>
<reference key="4">
    <citation type="journal article" date="1995" name="J. Bacteriol.">
        <title>A reassessment of the relationship between aroK- and aroL-encoded shikimate kinase enzymes of Escherichia coli.</title>
        <authorList>
            <person name="Whipp M.J."/>
            <person name="Pittard A.J."/>
        </authorList>
    </citation>
    <scope>NUCLEOTIDE SEQUENCE [GENOMIC DNA]</scope>
    <source>
        <strain>K12</strain>
    </source>
</reference>
<reference key="5">
    <citation type="journal article" date="1995" name="Mol. Gen. Genet.">
        <title>Characterization of three genes in the dam-containing operon of Escherichia coli.</title>
        <authorList>
            <person name="Lyngstadaas A."/>
            <person name="Lobner-Olesen A."/>
            <person name="Boye E."/>
        </authorList>
    </citation>
    <scope>NUCLEOTIDE SEQUENCE [GENOMIC DNA]</scope>
</reference>
<reference key="6">
    <citation type="journal article" date="1997" name="Science">
        <title>The complete genome sequence of Escherichia coli K-12.</title>
        <authorList>
            <person name="Blattner F.R."/>
            <person name="Plunkett G. III"/>
            <person name="Bloch C.A."/>
            <person name="Perna N.T."/>
            <person name="Burland V."/>
            <person name="Riley M."/>
            <person name="Collado-Vides J."/>
            <person name="Glasner J.D."/>
            <person name="Rode C.K."/>
            <person name="Mayhew G.F."/>
            <person name="Gregor J."/>
            <person name="Davis N.W."/>
            <person name="Kirkpatrick H.A."/>
            <person name="Goeden M.A."/>
            <person name="Rose D.J."/>
            <person name="Mau B."/>
            <person name="Shao Y."/>
        </authorList>
    </citation>
    <scope>NUCLEOTIDE SEQUENCE [LARGE SCALE GENOMIC DNA]</scope>
    <source>
        <strain>K12 / MG1655 / ATCC 47076</strain>
    </source>
</reference>
<reference key="7">
    <citation type="journal article" date="2006" name="Mol. Syst. Biol.">
        <title>Highly accurate genome sequences of Escherichia coli K-12 strains MG1655 and W3110.</title>
        <authorList>
            <person name="Hayashi K."/>
            <person name="Morooka N."/>
            <person name="Yamamoto Y."/>
            <person name="Fujita K."/>
            <person name="Isono K."/>
            <person name="Choi S."/>
            <person name="Ohtsubo E."/>
            <person name="Baba T."/>
            <person name="Wanner B.L."/>
            <person name="Mori H."/>
            <person name="Horiuchi T."/>
        </authorList>
    </citation>
    <scope>NUCLEOTIDE SEQUENCE [LARGE SCALE GENOMIC DNA]</scope>
    <source>
        <strain>K12 / W3110 / ATCC 27325 / DSM 5911</strain>
    </source>
</reference>
<reference key="8">
    <citation type="journal article" date="1997" name="Electrophoresis">
        <title>Comparing the predicted and observed properties of proteins encoded in the genome of Escherichia coli K-12.</title>
        <authorList>
            <person name="Link A.J."/>
            <person name="Robison K."/>
            <person name="Church G.M."/>
        </authorList>
    </citation>
    <scope>PROTEIN SEQUENCE OF 2-13</scope>
    <source>
        <strain>K12 / EMG2</strain>
    </source>
</reference>
<reference key="9">
    <citation type="journal article" date="1998" name="J. Mol. Biol.">
        <title>Protein identification with N and C-terminal sequence tags in proteome projects.</title>
        <authorList>
            <person name="Wilkins M.R."/>
            <person name="Gasteiger E."/>
            <person name="Tonella L."/>
            <person name="Ou K."/>
            <person name="Tyler M."/>
            <person name="Sanchez J.-C."/>
            <person name="Gooley A.A."/>
            <person name="Walsh B.J."/>
            <person name="Bairoch A."/>
            <person name="Appel R.D."/>
            <person name="Williams K.L."/>
            <person name="Hochstrasser D.F."/>
        </authorList>
    </citation>
    <scope>PROTEIN SEQUENCE OF 2-5</scope>
    <source>
        <strain>K12 / W3110 / ATCC 27325 / DSM 5911</strain>
    </source>
</reference>
<reference key="10">
    <citation type="journal article" date="1986" name="J. Bacteriol.">
        <title>Purification and properties of shikimate kinase II from Escherichia coli K-12.</title>
        <authorList>
            <person name="DeFeyter R.C."/>
            <person name="Pittard J."/>
        </authorList>
    </citation>
    <scope>KINETIC PARAMETERS</scope>
    <source>
        <strain>K12</strain>
    </source>
</reference>
<reference key="11">
    <citation type="journal article" date="2002" name="Proteins">
        <title>Crystal structure of the Escherichia coli shikimate kinase I (AroK) that confers sensitivity to mecillinam.</title>
        <authorList>
            <person name="Romanowski M.J."/>
            <person name="Burley S.K."/>
        </authorList>
    </citation>
    <scope>X-RAY CRYSTALLOGRAPHY (2.05 ANGSTROMS)</scope>
    <scope>SUBUNIT</scope>
</reference>
<evidence type="ECO:0000250" key="1"/>
<evidence type="ECO:0000269" key="2">
    <source>
    </source>
</evidence>
<evidence type="ECO:0000269" key="3">
    <source>
    </source>
</evidence>
<evidence type="ECO:0000269" key="4">
    <source>
    </source>
</evidence>
<evidence type="ECO:0000269" key="5">
    <source>
    </source>
</evidence>
<evidence type="ECO:0000269" key="6">
    <source>
    </source>
</evidence>
<evidence type="ECO:0000305" key="7"/>
<evidence type="ECO:0007829" key="8">
    <source>
        <dbReference type="PDB" id="1KAG"/>
    </source>
</evidence>
<feature type="initiator methionine" description="Removed" evidence="5 6">
    <location>
        <position position="1"/>
    </location>
</feature>
<feature type="chain" id="PRO_0000192377" description="Shikimate kinase 1">
    <location>
        <begin position="2"/>
        <end position="173"/>
    </location>
</feature>
<feature type="region of interest" description="Lid domain">
    <location>
        <begin position="116"/>
        <end position="127"/>
    </location>
</feature>
<feature type="binding site" evidence="1">
    <location>
        <begin position="14"/>
        <end position="19"/>
    </location>
    <ligand>
        <name>ATP</name>
        <dbReference type="ChEBI" id="CHEBI:30616"/>
    </ligand>
</feature>
<feature type="binding site" evidence="1">
    <location>
        <position position="18"/>
    </location>
    <ligand>
        <name>Mg(2+)</name>
        <dbReference type="ChEBI" id="CHEBI:18420"/>
    </ligand>
</feature>
<feature type="binding site" evidence="1">
    <location>
        <position position="36"/>
    </location>
    <ligand>
        <name>substrate</name>
    </ligand>
</feature>
<feature type="binding site" evidence="1">
    <location>
        <position position="60"/>
    </location>
    <ligand>
        <name>substrate</name>
    </ligand>
</feature>
<feature type="binding site" evidence="1">
    <location>
        <position position="82"/>
    </location>
    <ligand>
        <name>substrate</name>
    </ligand>
</feature>
<feature type="binding site" evidence="1">
    <location>
        <position position="120"/>
    </location>
    <ligand>
        <name>ATP</name>
        <dbReference type="ChEBI" id="CHEBI:30616"/>
    </ligand>
</feature>
<feature type="binding site" evidence="1">
    <location>
        <position position="140"/>
    </location>
    <ligand>
        <name>substrate</name>
    </ligand>
</feature>
<feature type="binding site" evidence="1">
    <location>
        <position position="157"/>
    </location>
    <ligand>
        <name>ATP</name>
        <dbReference type="ChEBI" id="CHEBI:30616"/>
    </ligand>
</feature>
<feature type="strand" evidence="8">
    <location>
        <begin position="7"/>
        <end position="10"/>
    </location>
</feature>
<feature type="helix" evidence="8">
    <location>
        <begin position="17"/>
        <end position="27"/>
    </location>
</feature>
<feature type="strand" evidence="8">
    <location>
        <begin position="31"/>
        <end position="34"/>
    </location>
</feature>
<feature type="helix" evidence="8">
    <location>
        <begin position="35"/>
        <end position="43"/>
    </location>
</feature>
<feature type="helix" evidence="8">
    <location>
        <begin position="47"/>
        <end position="71"/>
    </location>
</feature>
<feature type="strand" evidence="8">
    <location>
        <begin position="73"/>
        <end position="79"/>
    </location>
</feature>
<feature type="helix" evidence="8">
    <location>
        <begin position="84"/>
        <end position="86"/>
    </location>
</feature>
<feature type="helix" evidence="8">
    <location>
        <begin position="88"/>
        <end position="97"/>
    </location>
</feature>
<feature type="strand" evidence="8">
    <location>
        <begin position="98"/>
        <end position="103"/>
    </location>
</feature>
<feature type="helix" evidence="8">
    <location>
        <begin position="107"/>
        <end position="111"/>
    </location>
</feature>
<feature type="strand" evidence="8">
    <location>
        <begin position="123"/>
        <end position="126"/>
    </location>
</feature>
<feature type="helix" evidence="8">
    <location>
        <begin position="130"/>
        <end position="147"/>
    </location>
</feature>
<feature type="strand" evidence="8">
    <location>
        <begin position="149"/>
        <end position="152"/>
    </location>
</feature>
<feature type="helix" evidence="8">
    <location>
        <begin position="159"/>
        <end position="170"/>
    </location>
</feature>
<keyword id="KW-0002">3D-structure</keyword>
<keyword id="KW-0028">Amino-acid biosynthesis</keyword>
<keyword id="KW-0057">Aromatic amino acid biosynthesis</keyword>
<keyword id="KW-0067">ATP-binding</keyword>
<keyword id="KW-0963">Cytoplasm</keyword>
<keyword id="KW-0903">Direct protein sequencing</keyword>
<keyword id="KW-0418">Kinase</keyword>
<keyword id="KW-0460">Magnesium</keyword>
<keyword id="KW-0479">Metal-binding</keyword>
<keyword id="KW-0547">Nucleotide-binding</keyword>
<keyword id="KW-1185">Reference proteome</keyword>
<keyword id="KW-0808">Transferase</keyword>
<dbReference type="EC" id="2.7.1.71"/>
<dbReference type="EMBL" id="M76389">
    <property type="protein sequence ID" value="AAC36834.1"/>
    <property type="status" value="ALT_FRAME"/>
    <property type="molecule type" value="Unassigned_DNA"/>
</dbReference>
<dbReference type="EMBL" id="X80167">
    <property type="protein sequence ID" value="CAA56448.1"/>
    <property type="molecule type" value="Genomic_DNA"/>
</dbReference>
<dbReference type="EMBL" id="L39822">
    <property type="protein sequence ID" value="AAB59099.1"/>
    <property type="molecule type" value="Genomic_DNA"/>
</dbReference>
<dbReference type="EMBL" id="Z19601">
    <property type="protein sequence ID" value="CAA79665.1"/>
    <property type="status" value="ALT_FRAME"/>
    <property type="molecule type" value="Genomic_DNA"/>
</dbReference>
<dbReference type="EMBL" id="U18997">
    <property type="protein sequence ID" value="AAA58187.1"/>
    <property type="status" value="ALT_INIT"/>
    <property type="molecule type" value="Genomic_DNA"/>
</dbReference>
<dbReference type="EMBL" id="U00096">
    <property type="protein sequence ID" value="AAC76415.2"/>
    <property type="molecule type" value="Genomic_DNA"/>
</dbReference>
<dbReference type="EMBL" id="AP009048">
    <property type="protein sequence ID" value="BAE77901.1"/>
    <property type="molecule type" value="Genomic_DNA"/>
</dbReference>
<dbReference type="PIR" id="A65134">
    <property type="entry name" value="A65134"/>
</dbReference>
<dbReference type="RefSeq" id="WP_000818618.1">
    <property type="nucleotide sequence ID" value="NZ_STEB01000004.1"/>
</dbReference>
<dbReference type="RefSeq" id="YP_026215.2">
    <property type="nucleotide sequence ID" value="NC_000913.3"/>
</dbReference>
<dbReference type="PDB" id="1KAG">
    <property type="method" value="X-ray"/>
    <property type="resolution" value="2.05 A"/>
    <property type="chains" value="A/B=1-173"/>
</dbReference>
<dbReference type="PDBsum" id="1KAG"/>
<dbReference type="SMR" id="P0A6D7"/>
<dbReference type="BioGRID" id="4259297">
    <property type="interactions" value="224"/>
</dbReference>
<dbReference type="DIP" id="DIP-48271N"/>
<dbReference type="FunCoup" id="P0A6D7">
    <property type="interactions" value="761"/>
</dbReference>
<dbReference type="IntAct" id="P0A6D7">
    <property type="interactions" value="1"/>
</dbReference>
<dbReference type="STRING" id="511145.b3390"/>
<dbReference type="jPOST" id="P0A6D7"/>
<dbReference type="PaxDb" id="511145-b3390"/>
<dbReference type="EnsemblBacteria" id="AAC76415">
    <property type="protein sequence ID" value="AAC76415"/>
    <property type="gene ID" value="b3390"/>
</dbReference>
<dbReference type="GeneID" id="2847759"/>
<dbReference type="GeneID" id="93778608"/>
<dbReference type="KEGG" id="ecj:JW5947"/>
<dbReference type="KEGG" id="eco:b3390"/>
<dbReference type="KEGG" id="ecoc:C3026_18395"/>
<dbReference type="PATRIC" id="fig|1411691.4.peg.3340"/>
<dbReference type="EchoBASE" id="EB0079"/>
<dbReference type="eggNOG" id="COG0703">
    <property type="taxonomic scope" value="Bacteria"/>
</dbReference>
<dbReference type="HOGENOM" id="CLU_057607_2_2_6"/>
<dbReference type="InParanoid" id="P0A6D7"/>
<dbReference type="OMA" id="FMGCGKS"/>
<dbReference type="OrthoDB" id="9800332at2"/>
<dbReference type="PhylomeDB" id="P0A6D7"/>
<dbReference type="BioCyc" id="EcoCyc:AROK-MONOMER"/>
<dbReference type="BioCyc" id="MetaCyc:AROK-MONOMER"/>
<dbReference type="BRENDA" id="2.7.1.71">
    <property type="organism ID" value="2026"/>
</dbReference>
<dbReference type="UniPathway" id="UPA00053">
    <property type="reaction ID" value="UER00088"/>
</dbReference>
<dbReference type="EvolutionaryTrace" id="P0A6D7"/>
<dbReference type="PRO" id="PR:P0A6D7"/>
<dbReference type="Proteomes" id="UP000000625">
    <property type="component" value="Chromosome"/>
</dbReference>
<dbReference type="GO" id="GO:0005829">
    <property type="term" value="C:cytosol"/>
    <property type="evidence" value="ECO:0000314"/>
    <property type="project" value="EcoCyc"/>
</dbReference>
<dbReference type="GO" id="GO:0005524">
    <property type="term" value="F:ATP binding"/>
    <property type="evidence" value="ECO:0007669"/>
    <property type="project" value="UniProtKB-UniRule"/>
</dbReference>
<dbReference type="GO" id="GO:0000287">
    <property type="term" value="F:magnesium ion binding"/>
    <property type="evidence" value="ECO:0007669"/>
    <property type="project" value="UniProtKB-UniRule"/>
</dbReference>
<dbReference type="GO" id="GO:0004765">
    <property type="term" value="F:shikimate kinase activity"/>
    <property type="evidence" value="ECO:0000314"/>
    <property type="project" value="EcoCyc"/>
</dbReference>
<dbReference type="GO" id="GO:0008652">
    <property type="term" value="P:amino acid biosynthetic process"/>
    <property type="evidence" value="ECO:0007669"/>
    <property type="project" value="UniProtKB-KW"/>
</dbReference>
<dbReference type="GO" id="GO:0009073">
    <property type="term" value="P:aromatic amino acid family biosynthetic process"/>
    <property type="evidence" value="ECO:0007669"/>
    <property type="project" value="UniProtKB-KW"/>
</dbReference>
<dbReference type="GO" id="GO:0009423">
    <property type="term" value="P:chorismate biosynthetic process"/>
    <property type="evidence" value="ECO:0000316"/>
    <property type="project" value="EcoCyc"/>
</dbReference>
<dbReference type="GO" id="GO:0046677">
    <property type="term" value="P:response to antibiotic"/>
    <property type="evidence" value="ECO:0000315"/>
    <property type="project" value="EcoCyc"/>
</dbReference>
<dbReference type="CDD" id="cd00464">
    <property type="entry name" value="SK"/>
    <property type="match status" value="1"/>
</dbReference>
<dbReference type="FunFam" id="3.40.50.300:FF:000099">
    <property type="entry name" value="Shikimate kinase 1"/>
    <property type="match status" value="1"/>
</dbReference>
<dbReference type="Gene3D" id="3.40.50.300">
    <property type="entry name" value="P-loop containing nucleotide triphosphate hydrolases"/>
    <property type="match status" value="1"/>
</dbReference>
<dbReference type="HAMAP" id="MF_00109">
    <property type="entry name" value="Shikimate_kinase"/>
    <property type="match status" value="1"/>
</dbReference>
<dbReference type="InterPro" id="IPR027417">
    <property type="entry name" value="P-loop_NTPase"/>
</dbReference>
<dbReference type="InterPro" id="IPR031322">
    <property type="entry name" value="Shikimate/glucono_kinase"/>
</dbReference>
<dbReference type="InterPro" id="IPR000623">
    <property type="entry name" value="Shikimate_kinase/TSH1"/>
</dbReference>
<dbReference type="InterPro" id="IPR023000">
    <property type="entry name" value="Shikimate_kinase_CS"/>
</dbReference>
<dbReference type="NCBIfam" id="NF003456">
    <property type="entry name" value="PRK05057.1"/>
    <property type="match status" value="1"/>
</dbReference>
<dbReference type="PANTHER" id="PTHR21087">
    <property type="entry name" value="SHIKIMATE KINASE"/>
    <property type="match status" value="1"/>
</dbReference>
<dbReference type="PANTHER" id="PTHR21087:SF16">
    <property type="entry name" value="SHIKIMATE KINASE 1, CHLOROPLASTIC"/>
    <property type="match status" value="1"/>
</dbReference>
<dbReference type="Pfam" id="PF01202">
    <property type="entry name" value="SKI"/>
    <property type="match status" value="1"/>
</dbReference>
<dbReference type="PRINTS" id="PR01100">
    <property type="entry name" value="SHIKIMTKNASE"/>
</dbReference>
<dbReference type="SUPFAM" id="SSF52540">
    <property type="entry name" value="P-loop containing nucleoside triphosphate hydrolases"/>
    <property type="match status" value="1"/>
</dbReference>
<dbReference type="PROSITE" id="PS01128">
    <property type="entry name" value="SHIKIMATE_KINASE"/>
    <property type="match status" value="1"/>
</dbReference>
<name>AROK_ECOLI</name>